<gene>
    <name evidence="1" type="primary">rpoB</name>
    <name type="ordered locus">Kole_1838</name>
</gene>
<sequence>MRKAMFGKRERWVFGKVIEPLEIPNLIEIQLKSFKWFLEEGLLDVLKKYSPIKSQIQRPDSRKNEKGFSLEFVRTRIGNPKYNIQECKDKGLTYSVPLYVTVRITDLYSGEIKEEEAFFGYLPYMTDNASFIINGAERVIVNQLVRSPGVYFVDEPTKASSGSLPILVAHFLPVKGAWLEILLNPNKKVLQVRIDRRRKMNLFLLLKTLGYEDDLELLDLFVHDVDANDEYVLLEHVGSIILSDVKTRNELIAERGAVLTEALAKKIAESDVDVIKLPMPIAMSTLKAFHRTYGENIKSEDAYIEIFRKLRPGEIPRINAAKNYLHNLYFSPDRFDFSEVGRHKINSRLRKVYKEYLKEVKKTEVPEDIEYAEESTVLTELDIVLAARHLAQLESHPELLDTKDHLGNKRVRTVGELMQNEFEKAFVKIHKLLEEKLTIYTSFDKVTVQNLVNVRTLMTTLHQFFATSQLSQFMDQVNPLAELTHKRRLSAIGPGGLKREHARFEVRDVHHSHYGRMCPIETPEGANIGLMTSLSTYATIDKYGFLLTPYRKVKNGKVTDEIVYLAADEEELYNIAQSTIEVDDNGNIVESVVEVRHAGEIKYVEKEKVDLMAISPKQIVSVSTSLIPFLEHDDANRALMGSNMQRQAVPVIKPEAPIVGTGVEAIAARDSGYVVLAKHRGIVKKVDSRKIIIERIDEDGNPILSESGEPIQDVYTLHKFIRTNQDTTINQRPIVSQGETVEKGDPIADGPSTDMGELALGKNIFVAFLPWEGYNFEDAILVSQELLEEETFTTIHIEMYETVARDTQLGPEEITADIPNVSKELLKNLDENGIVRVGAYVSSGDILVGKVTPKGESDTTPEEKIIRSVFGDRGRDVKDTSLRVPHGVEGRVIDVKVFDKEEISELGSGVNKLVKVYVACRKPLDVGDKLAGRHGNKGVVSNIIPKEDMPFLPDGTPVQIVLSPLGVPSRMNVGQVLETHLGWLGQLTNRYFATPIFDGAKEDEIMEELYKARKAAGIDVGDSKKEKNGKVLLRDGRSGLPFDYPVVVGVMYMLKLVHIAKDKIHARSTGPYSLIHQQPLGGKAHFGGQRFGEMEVWALEAHGAAHTLNEVLTVKSDDIKGRNEVYKAILKGLNVPGPGIPESFKVLIKELQGLALDIRVYDQNGNELDVDKL</sequence>
<comment type="function">
    <text evidence="1">DNA-dependent RNA polymerase catalyzes the transcription of DNA into RNA using the four ribonucleoside triphosphates as substrates.</text>
</comment>
<comment type="catalytic activity">
    <reaction evidence="1">
        <text>RNA(n) + a ribonucleoside 5'-triphosphate = RNA(n+1) + diphosphate</text>
        <dbReference type="Rhea" id="RHEA:21248"/>
        <dbReference type="Rhea" id="RHEA-COMP:14527"/>
        <dbReference type="Rhea" id="RHEA-COMP:17342"/>
        <dbReference type="ChEBI" id="CHEBI:33019"/>
        <dbReference type="ChEBI" id="CHEBI:61557"/>
        <dbReference type="ChEBI" id="CHEBI:140395"/>
        <dbReference type="EC" id="2.7.7.6"/>
    </reaction>
</comment>
<comment type="subunit">
    <text evidence="1">The RNAP catalytic core consists of 2 alpha, 1 beta, 1 beta' and 1 omega subunit. When a sigma factor is associated with the core the holoenzyme is formed, which can initiate transcription.</text>
</comment>
<comment type="similarity">
    <text evidence="1">Belongs to the RNA polymerase beta chain family.</text>
</comment>
<feature type="chain" id="PRO_1000214481" description="DNA-directed RNA polymerase subunit beta">
    <location>
        <begin position="1"/>
        <end position="1173"/>
    </location>
</feature>
<organism>
    <name type="scientific">Kosmotoga olearia (strain ATCC BAA-1733 / DSM 21960 / TBF 19.5.1)</name>
    <dbReference type="NCBI Taxonomy" id="521045"/>
    <lineage>
        <taxon>Bacteria</taxon>
        <taxon>Thermotogati</taxon>
        <taxon>Thermotogota</taxon>
        <taxon>Thermotogae</taxon>
        <taxon>Kosmotogales</taxon>
        <taxon>Kosmotogaceae</taxon>
        <taxon>Kosmotoga</taxon>
    </lineage>
</organism>
<keyword id="KW-0240">DNA-directed RNA polymerase</keyword>
<keyword id="KW-0548">Nucleotidyltransferase</keyword>
<keyword id="KW-1185">Reference proteome</keyword>
<keyword id="KW-0804">Transcription</keyword>
<keyword id="KW-0808">Transferase</keyword>
<accession>C5CGD9</accession>
<evidence type="ECO:0000255" key="1">
    <source>
        <dbReference type="HAMAP-Rule" id="MF_01321"/>
    </source>
</evidence>
<proteinExistence type="inferred from homology"/>
<name>RPOB_KOSOT</name>
<reference key="1">
    <citation type="submission" date="2009-06" db="EMBL/GenBank/DDBJ databases">
        <title>Complete sequence of Thermotogales bacterium TBF 19.5.1.</title>
        <authorList>
            <consortium name="US DOE Joint Genome Institute"/>
            <person name="Lucas S."/>
            <person name="Copeland A."/>
            <person name="Lapidus A."/>
            <person name="Glavina del Rio T."/>
            <person name="Tice H."/>
            <person name="Bruce D."/>
            <person name="Goodwin L."/>
            <person name="Pitluck S."/>
            <person name="Chertkov O."/>
            <person name="Brettin T."/>
            <person name="Detter J.C."/>
            <person name="Han C."/>
            <person name="Schmutz J."/>
            <person name="Larimer F."/>
            <person name="Land M."/>
            <person name="Hauser L."/>
            <person name="Kyrpides N."/>
            <person name="Ovchinnikova G."/>
            <person name="Noll K."/>
        </authorList>
    </citation>
    <scope>NUCLEOTIDE SEQUENCE [LARGE SCALE GENOMIC DNA]</scope>
    <source>
        <strain>ATCC BAA-1733 / DSM 21960 / TBF 19.5.1</strain>
    </source>
</reference>
<protein>
    <recommendedName>
        <fullName evidence="1">DNA-directed RNA polymerase subunit beta</fullName>
        <shortName evidence="1">RNAP subunit beta</shortName>
        <ecNumber evidence="1">2.7.7.6</ecNumber>
    </recommendedName>
    <alternativeName>
        <fullName evidence="1">RNA polymerase subunit beta</fullName>
    </alternativeName>
    <alternativeName>
        <fullName evidence="1">Transcriptase subunit beta</fullName>
    </alternativeName>
</protein>
<dbReference type="EC" id="2.7.7.6" evidence="1"/>
<dbReference type="EMBL" id="CP001634">
    <property type="protein sequence ID" value="ACR80520.1"/>
    <property type="molecule type" value="Genomic_DNA"/>
</dbReference>
<dbReference type="RefSeq" id="WP_015869163.1">
    <property type="nucleotide sequence ID" value="NC_012785.1"/>
</dbReference>
<dbReference type="SMR" id="C5CGD9"/>
<dbReference type="STRING" id="521045.Kole_1838"/>
<dbReference type="KEGG" id="kol:Kole_1838"/>
<dbReference type="eggNOG" id="COG0085">
    <property type="taxonomic scope" value="Bacteria"/>
</dbReference>
<dbReference type="HOGENOM" id="CLU_000524_4_0_0"/>
<dbReference type="OrthoDB" id="9803954at2"/>
<dbReference type="Proteomes" id="UP000002382">
    <property type="component" value="Chromosome"/>
</dbReference>
<dbReference type="GO" id="GO:0000428">
    <property type="term" value="C:DNA-directed RNA polymerase complex"/>
    <property type="evidence" value="ECO:0007669"/>
    <property type="project" value="UniProtKB-KW"/>
</dbReference>
<dbReference type="GO" id="GO:0003677">
    <property type="term" value="F:DNA binding"/>
    <property type="evidence" value="ECO:0007669"/>
    <property type="project" value="UniProtKB-UniRule"/>
</dbReference>
<dbReference type="GO" id="GO:0003899">
    <property type="term" value="F:DNA-directed RNA polymerase activity"/>
    <property type="evidence" value="ECO:0007669"/>
    <property type="project" value="UniProtKB-UniRule"/>
</dbReference>
<dbReference type="GO" id="GO:0032549">
    <property type="term" value="F:ribonucleoside binding"/>
    <property type="evidence" value="ECO:0007669"/>
    <property type="project" value="InterPro"/>
</dbReference>
<dbReference type="GO" id="GO:0006351">
    <property type="term" value="P:DNA-templated transcription"/>
    <property type="evidence" value="ECO:0007669"/>
    <property type="project" value="UniProtKB-UniRule"/>
</dbReference>
<dbReference type="CDD" id="cd00653">
    <property type="entry name" value="RNA_pol_B_RPB2"/>
    <property type="match status" value="1"/>
</dbReference>
<dbReference type="Gene3D" id="2.40.50.100">
    <property type="match status" value="1"/>
</dbReference>
<dbReference type="Gene3D" id="2.40.50.150">
    <property type="match status" value="1"/>
</dbReference>
<dbReference type="Gene3D" id="3.90.1100.10">
    <property type="match status" value="2"/>
</dbReference>
<dbReference type="Gene3D" id="2.30.150.10">
    <property type="entry name" value="DNA-directed RNA polymerase, beta subunit, external 1 domain"/>
    <property type="match status" value="1"/>
</dbReference>
<dbReference type="Gene3D" id="2.40.270.10">
    <property type="entry name" value="DNA-directed RNA polymerase, subunit 2, domain 6"/>
    <property type="match status" value="1"/>
</dbReference>
<dbReference type="Gene3D" id="3.90.1800.10">
    <property type="entry name" value="RNA polymerase alpha subunit dimerisation domain"/>
    <property type="match status" value="1"/>
</dbReference>
<dbReference type="Gene3D" id="3.90.1110.10">
    <property type="entry name" value="RNA polymerase Rpb2, domain 2"/>
    <property type="match status" value="2"/>
</dbReference>
<dbReference type="HAMAP" id="MF_01321">
    <property type="entry name" value="RNApol_bact_RpoB"/>
    <property type="match status" value="1"/>
</dbReference>
<dbReference type="InterPro" id="IPR042107">
    <property type="entry name" value="DNA-dir_RNA_pol_bsu_ext_1_sf"/>
</dbReference>
<dbReference type="InterPro" id="IPR019462">
    <property type="entry name" value="DNA-dir_RNA_pol_bsu_external_1"/>
</dbReference>
<dbReference type="InterPro" id="IPR015712">
    <property type="entry name" value="DNA-dir_RNA_pol_su2"/>
</dbReference>
<dbReference type="InterPro" id="IPR007120">
    <property type="entry name" value="DNA-dir_RNAP_su2_dom"/>
</dbReference>
<dbReference type="InterPro" id="IPR037033">
    <property type="entry name" value="DNA-dir_RNAP_su2_hyb_sf"/>
</dbReference>
<dbReference type="InterPro" id="IPR010243">
    <property type="entry name" value="RNA_pol_bsu_bac"/>
</dbReference>
<dbReference type="InterPro" id="IPR007121">
    <property type="entry name" value="RNA_pol_bsu_CS"/>
</dbReference>
<dbReference type="InterPro" id="IPR007644">
    <property type="entry name" value="RNA_pol_bsu_protrusion"/>
</dbReference>
<dbReference type="InterPro" id="IPR007642">
    <property type="entry name" value="RNA_pol_Rpb2_2"/>
</dbReference>
<dbReference type="InterPro" id="IPR037034">
    <property type="entry name" value="RNA_pol_Rpb2_2_sf"/>
</dbReference>
<dbReference type="InterPro" id="IPR007645">
    <property type="entry name" value="RNA_pol_Rpb2_3"/>
</dbReference>
<dbReference type="InterPro" id="IPR007641">
    <property type="entry name" value="RNA_pol_Rpb2_7"/>
</dbReference>
<dbReference type="InterPro" id="IPR014724">
    <property type="entry name" value="RNA_pol_RPB2_OB-fold"/>
</dbReference>
<dbReference type="NCBIfam" id="NF001616">
    <property type="entry name" value="PRK00405.1"/>
    <property type="match status" value="1"/>
</dbReference>
<dbReference type="NCBIfam" id="TIGR02013">
    <property type="entry name" value="rpoB"/>
    <property type="match status" value="1"/>
</dbReference>
<dbReference type="PANTHER" id="PTHR20856">
    <property type="entry name" value="DNA-DIRECTED RNA POLYMERASE I SUBUNIT 2"/>
    <property type="match status" value="1"/>
</dbReference>
<dbReference type="Pfam" id="PF04563">
    <property type="entry name" value="RNA_pol_Rpb2_1"/>
    <property type="match status" value="1"/>
</dbReference>
<dbReference type="Pfam" id="PF04561">
    <property type="entry name" value="RNA_pol_Rpb2_2"/>
    <property type="match status" value="1"/>
</dbReference>
<dbReference type="Pfam" id="PF04565">
    <property type="entry name" value="RNA_pol_Rpb2_3"/>
    <property type="match status" value="1"/>
</dbReference>
<dbReference type="Pfam" id="PF10385">
    <property type="entry name" value="RNA_pol_Rpb2_45"/>
    <property type="match status" value="1"/>
</dbReference>
<dbReference type="Pfam" id="PF00562">
    <property type="entry name" value="RNA_pol_Rpb2_6"/>
    <property type="match status" value="1"/>
</dbReference>
<dbReference type="Pfam" id="PF04560">
    <property type="entry name" value="RNA_pol_Rpb2_7"/>
    <property type="match status" value="1"/>
</dbReference>
<dbReference type="SUPFAM" id="SSF64484">
    <property type="entry name" value="beta and beta-prime subunits of DNA dependent RNA-polymerase"/>
    <property type="match status" value="1"/>
</dbReference>
<dbReference type="PROSITE" id="PS01166">
    <property type="entry name" value="RNA_POL_BETA"/>
    <property type="match status" value="1"/>
</dbReference>